<evidence type="ECO:0000255" key="1">
    <source>
        <dbReference type="HAMAP-Rule" id="MF_00040"/>
    </source>
</evidence>
<reference key="1">
    <citation type="journal article" date="2008" name="DNA Res.">
        <title>Complete genome sequence of Finegoldia magna, an anaerobic opportunistic pathogen.</title>
        <authorList>
            <person name="Goto T."/>
            <person name="Yamashita A."/>
            <person name="Hirakawa H."/>
            <person name="Matsutani M."/>
            <person name="Todo K."/>
            <person name="Ohshima K."/>
            <person name="Toh H."/>
            <person name="Miyamoto K."/>
            <person name="Kuhara S."/>
            <person name="Hattori M."/>
            <person name="Shimizu T."/>
            <person name="Akimoto S."/>
        </authorList>
    </citation>
    <scope>NUCLEOTIDE SEQUENCE [LARGE SCALE GENOMIC DNA]</scope>
    <source>
        <strain>ATCC 29328 / DSM 20472 / WAL 2508</strain>
    </source>
</reference>
<feature type="chain" id="PRO_1000090742" description="Ribosome-recycling factor">
    <location>
        <begin position="1"/>
        <end position="185"/>
    </location>
</feature>
<accession>B0S187</accession>
<comment type="function">
    <text evidence="1">Responsible for the release of ribosomes from messenger RNA at the termination of protein biosynthesis. May increase the efficiency of translation by recycling ribosomes from one round of translation to another.</text>
</comment>
<comment type="subcellular location">
    <subcellularLocation>
        <location evidence="1">Cytoplasm</location>
    </subcellularLocation>
</comment>
<comment type="similarity">
    <text evidence="1">Belongs to the RRF family.</text>
</comment>
<gene>
    <name evidence="1" type="primary">frr</name>
    <name type="ordered locus">FMG_0709</name>
</gene>
<dbReference type="EMBL" id="AP008971">
    <property type="protein sequence ID" value="BAG08127.1"/>
    <property type="molecule type" value="Genomic_DNA"/>
</dbReference>
<dbReference type="RefSeq" id="WP_002838260.1">
    <property type="nucleotide sequence ID" value="NC_010376.1"/>
</dbReference>
<dbReference type="SMR" id="B0S187"/>
<dbReference type="STRING" id="334413.FMG_0709"/>
<dbReference type="KEGG" id="fma:FMG_0709"/>
<dbReference type="eggNOG" id="COG0233">
    <property type="taxonomic scope" value="Bacteria"/>
</dbReference>
<dbReference type="HOGENOM" id="CLU_073981_2_0_9"/>
<dbReference type="Proteomes" id="UP000001319">
    <property type="component" value="Chromosome"/>
</dbReference>
<dbReference type="GO" id="GO:0005737">
    <property type="term" value="C:cytoplasm"/>
    <property type="evidence" value="ECO:0007669"/>
    <property type="project" value="UniProtKB-SubCell"/>
</dbReference>
<dbReference type="GO" id="GO:0043023">
    <property type="term" value="F:ribosomal large subunit binding"/>
    <property type="evidence" value="ECO:0007669"/>
    <property type="project" value="TreeGrafter"/>
</dbReference>
<dbReference type="GO" id="GO:0006415">
    <property type="term" value="P:translational termination"/>
    <property type="evidence" value="ECO:0007669"/>
    <property type="project" value="UniProtKB-UniRule"/>
</dbReference>
<dbReference type="CDD" id="cd00520">
    <property type="entry name" value="RRF"/>
    <property type="match status" value="1"/>
</dbReference>
<dbReference type="FunFam" id="1.10.132.20:FF:000001">
    <property type="entry name" value="Ribosome-recycling factor"/>
    <property type="match status" value="1"/>
</dbReference>
<dbReference type="FunFam" id="3.30.1360.40:FF:000001">
    <property type="entry name" value="Ribosome-recycling factor"/>
    <property type="match status" value="1"/>
</dbReference>
<dbReference type="Gene3D" id="3.30.1360.40">
    <property type="match status" value="1"/>
</dbReference>
<dbReference type="Gene3D" id="1.10.132.20">
    <property type="entry name" value="Ribosome-recycling factor"/>
    <property type="match status" value="1"/>
</dbReference>
<dbReference type="HAMAP" id="MF_00040">
    <property type="entry name" value="RRF"/>
    <property type="match status" value="1"/>
</dbReference>
<dbReference type="InterPro" id="IPR002661">
    <property type="entry name" value="Ribosome_recyc_fac"/>
</dbReference>
<dbReference type="InterPro" id="IPR023584">
    <property type="entry name" value="Ribosome_recyc_fac_dom"/>
</dbReference>
<dbReference type="InterPro" id="IPR036191">
    <property type="entry name" value="RRF_sf"/>
</dbReference>
<dbReference type="NCBIfam" id="TIGR00496">
    <property type="entry name" value="frr"/>
    <property type="match status" value="1"/>
</dbReference>
<dbReference type="PANTHER" id="PTHR20982:SF3">
    <property type="entry name" value="MITOCHONDRIAL RIBOSOME RECYCLING FACTOR PSEUDO 1"/>
    <property type="match status" value="1"/>
</dbReference>
<dbReference type="PANTHER" id="PTHR20982">
    <property type="entry name" value="RIBOSOME RECYCLING FACTOR"/>
    <property type="match status" value="1"/>
</dbReference>
<dbReference type="Pfam" id="PF01765">
    <property type="entry name" value="RRF"/>
    <property type="match status" value="1"/>
</dbReference>
<dbReference type="SUPFAM" id="SSF55194">
    <property type="entry name" value="Ribosome recycling factor, RRF"/>
    <property type="match status" value="1"/>
</dbReference>
<name>RRF_FINM2</name>
<sequence length="185" mass="21125">MSKQILKDMETKADKTLHALKEELKTVRAGRANPSILDNIMVEYYGTSTPLKQVATISAPEARLLTIQPWDKSIMKEIEKQIQASNLGITPSNDGTIIRLPFPQLTEDRRKELTKVVKEYGEKSKVTIRSIRRDFVDDAKKMEKNAEISEDELHVLLDDIQSLTDKLTKEIDNIVTDKETELMEI</sequence>
<organism>
    <name type="scientific">Finegoldia magna (strain ATCC 29328 / DSM 20472 / WAL 2508)</name>
    <name type="common">Peptostreptococcus magnus</name>
    <dbReference type="NCBI Taxonomy" id="334413"/>
    <lineage>
        <taxon>Bacteria</taxon>
        <taxon>Bacillati</taxon>
        <taxon>Bacillota</taxon>
        <taxon>Tissierellia</taxon>
        <taxon>Tissierellales</taxon>
        <taxon>Peptoniphilaceae</taxon>
        <taxon>Finegoldia</taxon>
    </lineage>
</organism>
<proteinExistence type="inferred from homology"/>
<protein>
    <recommendedName>
        <fullName evidence="1">Ribosome-recycling factor</fullName>
        <shortName evidence="1">RRF</shortName>
    </recommendedName>
    <alternativeName>
        <fullName evidence="1">Ribosome-releasing factor</fullName>
    </alternativeName>
</protein>
<keyword id="KW-0963">Cytoplasm</keyword>
<keyword id="KW-0648">Protein biosynthesis</keyword>
<keyword id="KW-1185">Reference proteome</keyword>